<accession>Q805D5</accession>
<reference evidence="7" key="1">
    <citation type="journal article" date="2003" name="Proc. Natl. Acad. Sci. U.S.A.">
        <title>Four functionally distinct C-type natriuretic peptides found in fish reveal evolutionary history of the natriuretic peptide system.</title>
        <authorList>
            <person name="Inoue K."/>
            <person name="Naruse K."/>
            <person name="Yamagami S."/>
            <person name="Mitani H."/>
            <person name="Suzuki N."/>
            <person name="Takei Y."/>
        </authorList>
    </citation>
    <scope>NUCLEOTIDE SEQUENCE [MRNA]</scope>
    <source>
        <tissue evidence="7">Brain</tissue>
    </source>
</reference>
<name>ANFC2_TAKRU</name>
<evidence type="ECO:0000250" key="1"/>
<evidence type="ECO:0000250" key="2">
    <source>
        <dbReference type="UniProtKB" id="P18145"/>
    </source>
</evidence>
<evidence type="ECO:0000255" key="3"/>
<evidence type="ECO:0000255" key="4">
    <source>
        <dbReference type="RuleBase" id="RU003686"/>
    </source>
</evidence>
<evidence type="ECO:0000256" key="5">
    <source>
        <dbReference type="SAM" id="MobiDB-lite"/>
    </source>
</evidence>
<evidence type="ECO:0000303" key="6">
    <source>
    </source>
</evidence>
<evidence type="ECO:0000312" key="7">
    <source>
        <dbReference type="EMBL" id="BAC57072.1"/>
    </source>
</evidence>
<sequence>MAASSSSFVPLVLLFLAIPVEPRPSMTRDEAQVLRALFGARLSSIISTPVNTDDIAELLPRRPGPPRSFGASPGALRGLTRGSEGGSRFLLDFLQQQSKTTRRGRSSMVGGRGCFGMKIDRIGSISGLGC</sequence>
<keyword id="KW-0165">Cleavage on pair of basic residues</keyword>
<keyword id="KW-1015">Disulfide bond</keyword>
<keyword id="KW-0372">Hormone</keyword>
<keyword id="KW-1185">Reference proteome</keyword>
<keyword id="KW-0964">Secreted</keyword>
<keyword id="KW-0732">Signal</keyword>
<keyword id="KW-0838">Vasoactive</keyword>
<comment type="function">
    <text evidence="2 6">Exhibits natriuretic and vasodepressant activity. Has cGMP-stimulating activity. May help to regulate body fluid homeostasis in a variety of aquatic environments.</text>
</comment>
<comment type="subcellular location">
    <subcellularLocation>
        <location>Secreted</location>
    </subcellularLocation>
</comment>
<comment type="similarity">
    <text evidence="4">Belongs to the natriuretic peptide family.</text>
</comment>
<feature type="signal peptide" evidence="3">
    <location>
        <begin position="1"/>
        <end position="22"/>
    </location>
</feature>
<feature type="propeptide" id="PRO_0000001583" evidence="1">
    <location>
        <begin position="23"/>
        <end position="103"/>
    </location>
</feature>
<feature type="peptide" id="PRO_0000001584" description="C-type natriuretic peptide 2">
    <location>
        <begin position="104"/>
        <end position="130"/>
    </location>
</feature>
<feature type="region of interest" description="Disordered" evidence="5">
    <location>
        <begin position="57"/>
        <end position="77"/>
    </location>
</feature>
<feature type="disulfide bond" evidence="2">
    <location>
        <begin position="114"/>
        <end position="130"/>
    </location>
</feature>
<organism>
    <name type="scientific">Takifugu rubripes</name>
    <name type="common">Japanese pufferfish</name>
    <name type="synonym">Fugu rubripes</name>
    <dbReference type="NCBI Taxonomy" id="31033"/>
    <lineage>
        <taxon>Eukaryota</taxon>
        <taxon>Metazoa</taxon>
        <taxon>Chordata</taxon>
        <taxon>Craniata</taxon>
        <taxon>Vertebrata</taxon>
        <taxon>Euteleostomi</taxon>
        <taxon>Actinopterygii</taxon>
        <taxon>Neopterygii</taxon>
        <taxon>Teleostei</taxon>
        <taxon>Neoteleostei</taxon>
        <taxon>Acanthomorphata</taxon>
        <taxon>Eupercaria</taxon>
        <taxon>Tetraodontiformes</taxon>
        <taxon>Tetradontoidea</taxon>
        <taxon>Tetraodontidae</taxon>
        <taxon>Takifugu</taxon>
    </lineage>
</organism>
<dbReference type="EMBL" id="AB089936">
    <property type="protein sequence ID" value="BAC57072.1"/>
    <property type="molecule type" value="mRNA"/>
</dbReference>
<dbReference type="FunCoup" id="Q805D5">
    <property type="interactions" value="4"/>
</dbReference>
<dbReference type="STRING" id="31033.ENSTRUP00000058470"/>
<dbReference type="Ensembl" id="ENSTRUT00000079623.1">
    <property type="protein sequence ID" value="ENSTRUP00000058470.1"/>
    <property type="gene ID" value="ENSTRUG00000033063.1"/>
</dbReference>
<dbReference type="KEGG" id="tru:445905"/>
<dbReference type="CTD" id="100148055"/>
<dbReference type="eggNOG" id="KOG3368">
    <property type="taxonomic scope" value="Eukaryota"/>
</dbReference>
<dbReference type="GeneTree" id="ENSGT00500000046195"/>
<dbReference type="HOGENOM" id="CLU_983390_0_0_1"/>
<dbReference type="InParanoid" id="Q805D5"/>
<dbReference type="OMA" id="CFGMKID"/>
<dbReference type="OrthoDB" id="8911465at2759"/>
<dbReference type="Proteomes" id="UP000005226">
    <property type="component" value="Chromosome 8"/>
</dbReference>
<dbReference type="GO" id="GO:0005576">
    <property type="term" value="C:extracellular region"/>
    <property type="evidence" value="ECO:0007669"/>
    <property type="project" value="UniProtKB-SubCell"/>
</dbReference>
<dbReference type="GO" id="GO:0005179">
    <property type="term" value="F:hormone activity"/>
    <property type="evidence" value="ECO:0007669"/>
    <property type="project" value="UniProtKB-KW"/>
</dbReference>
<dbReference type="GO" id="GO:0097746">
    <property type="term" value="P:blood vessel diameter maintenance"/>
    <property type="evidence" value="ECO:0007669"/>
    <property type="project" value="UniProtKB-KW"/>
</dbReference>
<dbReference type="GO" id="GO:0006182">
    <property type="term" value="P:cGMP biosynthetic process"/>
    <property type="evidence" value="ECO:0007669"/>
    <property type="project" value="TreeGrafter"/>
</dbReference>
<dbReference type="GO" id="GO:0007168">
    <property type="term" value="P:receptor guanylyl cyclase signaling pathway"/>
    <property type="evidence" value="ECO:0007669"/>
    <property type="project" value="TreeGrafter"/>
</dbReference>
<dbReference type="InterPro" id="IPR002406">
    <property type="entry name" value="C_natriurtcpep"/>
</dbReference>
<dbReference type="InterPro" id="IPR000663">
    <property type="entry name" value="Natr_peptide"/>
</dbReference>
<dbReference type="InterPro" id="IPR030480">
    <property type="entry name" value="Natr_peptide_CS"/>
</dbReference>
<dbReference type="PANTHER" id="PTHR12167">
    <property type="entry name" value="C-TYPE NATRIURETIC PEPTIDE"/>
    <property type="match status" value="1"/>
</dbReference>
<dbReference type="PANTHER" id="PTHR12167:SF6">
    <property type="entry name" value="C-TYPE NATRIURETIC PEPTIDE 2-LIKE"/>
    <property type="match status" value="1"/>
</dbReference>
<dbReference type="Pfam" id="PF00212">
    <property type="entry name" value="ANP"/>
    <property type="match status" value="1"/>
</dbReference>
<dbReference type="PRINTS" id="PR00713">
    <property type="entry name" value="CNATPEPTIDE"/>
</dbReference>
<dbReference type="PRINTS" id="PR00710">
    <property type="entry name" value="NATPEPTIDES"/>
</dbReference>
<dbReference type="SMART" id="SM00183">
    <property type="entry name" value="NAT_PEP"/>
    <property type="match status" value="1"/>
</dbReference>
<dbReference type="PROSITE" id="PS00263">
    <property type="entry name" value="NATRIURETIC_PEPTIDE"/>
    <property type="match status" value="1"/>
</dbReference>
<gene>
    <name evidence="7" type="primary">cnp-2</name>
</gene>
<protein>
    <recommendedName>
        <fullName>C-type natriuretic peptide 2</fullName>
    </recommendedName>
</protein>
<proteinExistence type="evidence at transcript level"/>